<sequence length="133" mass="14576">MAYSSCLNRSLKPNKLLLRRIDGAIQVRSHVDLTFYSLVGSGRSGGGTTAPLFSRIHTSLISVWRAISRAQVEVRPQWENGAPNNASSQTKNYEITLSFWGDGGIVPFEPFFHAFPGGLEKAAINRTSLILPS</sequence>
<gene>
    <name type="primary">ycf68-1</name>
</gene>
<gene>
    <name type="primary">ycf68-2</name>
</gene>
<dbReference type="EMBL" id="AY522329">
    <property type="status" value="NOT_ANNOTATED_CDS"/>
    <property type="molecule type" value="Genomic_DNA"/>
</dbReference>
<dbReference type="STRING" id="39946.P0C305"/>
<dbReference type="Proteomes" id="UP000007015">
    <property type="component" value="Chloroplast"/>
</dbReference>
<dbReference type="GO" id="GO:0009507">
    <property type="term" value="C:chloroplast"/>
    <property type="evidence" value="ECO:0007669"/>
    <property type="project" value="UniProtKB-SubCell"/>
</dbReference>
<dbReference type="GO" id="GO:0009536">
    <property type="term" value="C:plastid"/>
    <property type="evidence" value="ECO:0000305"/>
    <property type="project" value="Gramene"/>
</dbReference>
<dbReference type="InterPro" id="IPR022546">
    <property type="entry name" value="Uncharacterised_Ycf68"/>
</dbReference>
<dbReference type="PANTHER" id="PTHR34890">
    <property type="entry name" value="ORF16-LACZ FUSION PROTEIN-RELATED"/>
    <property type="match status" value="1"/>
</dbReference>
<dbReference type="Pfam" id="PF10839">
    <property type="entry name" value="DUF2647"/>
    <property type="match status" value="1"/>
</dbReference>
<reference key="1">
    <citation type="journal article" date="2004" name="Plant Physiol.">
        <title>A comparison of rice chloroplast genomes.</title>
        <authorList>
            <person name="Tang J."/>
            <person name="Xia H."/>
            <person name="Cao M."/>
            <person name="Zhang X."/>
            <person name="Zeng W."/>
            <person name="Hu S."/>
            <person name="Tong W."/>
            <person name="Wang J."/>
            <person name="Wang J."/>
            <person name="Yu J."/>
            <person name="Yang H."/>
            <person name="Zhu L."/>
        </authorList>
    </citation>
    <scope>NUCLEOTIDE SEQUENCE [LARGE SCALE GENOMIC DNA]</scope>
    <source>
        <strain>cv. 93-11</strain>
    </source>
</reference>
<name>YCF68_ORYSI</name>
<proteinExistence type="inferred from homology"/>
<protein>
    <recommendedName>
        <fullName>Uncharacterized protein ycf68</fullName>
    </recommendedName>
</protein>
<comment type="subcellular location">
    <subcellularLocation>
        <location>Plastid</location>
        <location>Chloroplast</location>
    </subcellularLocation>
</comment>
<comment type="similarity">
    <text evidence="1">Belongs to the ycf68 family.</text>
</comment>
<geneLocation type="chloroplast"/>
<keyword id="KW-0150">Chloroplast</keyword>
<keyword id="KW-0934">Plastid</keyword>
<keyword id="KW-1185">Reference proteome</keyword>
<accession>P0C305</accession>
<organism>
    <name type="scientific">Oryza sativa subsp. indica</name>
    <name type="common">Rice</name>
    <dbReference type="NCBI Taxonomy" id="39946"/>
    <lineage>
        <taxon>Eukaryota</taxon>
        <taxon>Viridiplantae</taxon>
        <taxon>Streptophyta</taxon>
        <taxon>Embryophyta</taxon>
        <taxon>Tracheophyta</taxon>
        <taxon>Spermatophyta</taxon>
        <taxon>Magnoliopsida</taxon>
        <taxon>Liliopsida</taxon>
        <taxon>Poales</taxon>
        <taxon>Poaceae</taxon>
        <taxon>BOP clade</taxon>
        <taxon>Oryzoideae</taxon>
        <taxon>Oryzeae</taxon>
        <taxon>Oryzinae</taxon>
        <taxon>Oryza</taxon>
        <taxon>Oryza sativa</taxon>
    </lineage>
</organism>
<evidence type="ECO:0000305" key="1"/>
<feature type="chain" id="PRO_0000288619" description="Uncharacterized protein ycf68">
    <location>
        <begin position="1"/>
        <end position="133"/>
    </location>
</feature>